<protein>
    <recommendedName>
        <fullName evidence="1">Threonine/serine transporter TdcC</fullName>
    </recommendedName>
    <alternativeName>
        <fullName evidence="1">H(+)/threonine-serine symporter</fullName>
    </alternativeName>
</protein>
<proteinExistence type="inferred from homology"/>
<gene>
    <name evidence="1" type="primary">tdcC</name>
    <name type="ordered locus">SCH_3189</name>
</gene>
<accession>Q57JL7</accession>
<organism>
    <name type="scientific">Salmonella choleraesuis (strain SC-B67)</name>
    <dbReference type="NCBI Taxonomy" id="321314"/>
    <lineage>
        <taxon>Bacteria</taxon>
        <taxon>Pseudomonadati</taxon>
        <taxon>Pseudomonadota</taxon>
        <taxon>Gammaproteobacteria</taxon>
        <taxon>Enterobacterales</taxon>
        <taxon>Enterobacteriaceae</taxon>
        <taxon>Salmonella</taxon>
    </lineage>
</organism>
<sequence>MSTTDSIVSSQAKQSSWRKSDTTWTLGLFGTAIGAGVLFFPIRAGFGGLIPILLMLVLAYPIAFYCHRALARLCLSGSNPSGNITETVEEHFGKTGGVVITFLYFFAICPLLWIYGVTITNTFMTFWENQLQMPALNRGFVALFLLLLMAFVIWFGKDLMVKVMSYLVWPFIASLVLISLSLIPYWNSAVIDQVDLSNIALTGHDGILVTVWLGISIMVFSFNFSPIVSSFVVSKREEYEKEFGREFTERKCSQIISRASMLMVAVVMFFAFSCLFTLSPQNMADAKAQNIPVLSYLANHFASLSGTKSTFATVLEYGASIIALVAIFKSFFGHYLGTLEGLNGLVLKFGYKGDKTKVSMGKLNTISMIFIMGSTWVVAYANPNILDLIEAMGAPIIASLLCLLPMYAIRKAPSLAKYRGRLDNVFVTLIGLLTILNIVYKLF</sequence>
<reference key="1">
    <citation type="journal article" date="2005" name="Nucleic Acids Res.">
        <title>The genome sequence of Salmonella enterica serovar Choleraesuis, a highly invasive and resistant zoonotic pathogen.</title>
        <authorList>
            <person name="Chiu C.-H."/>
            <person name="Tang P."/>
            <person name="Chu C."/>
            <person name="Hu S."/>
            <person name="Bao Q."/>
            <person name="Yu J."/>
            <person name="Chou Y.-Y."/>
            <person name="Wang H.-S."/>
            <person name="Lee Y.-S."/>
        </authorList>
    </citation>
    <scope>NUCLEOTIDE SEQUENCE [LARGE SCALE GENOMIC DNA]</scope>
    <source>
        <strain>SC-B67</strain>
    </source>
</reference>
<feature type="chain" id="PRO_0000309168" description="Threonine/serine transporter TdcC">
    <location>
        <begin position="1"/>
        <end position="443"/>
    </location>
</feature>
<feature type="transmembrane region" description="Helical" evidence="1">
    <location>
        <begin position="22"/>
        <end position="42"/>
    </location>
</feature>
<feature type="transmembrane region" description="Helical" evidence="1">
    <location>
        <begin position="44"/>
        <end position="64"/>
    </location>
</feature>
<feature type="transmembrane region" description="Helical" evidence="1">
    <location>
        <begin position="97"/>
        <end position="117"/>
    </location>
</feature>
<feature type="transmembrane region" description="Helical" evidence="1">
    <location>
        <begin position="140"/>
        <end position="160"/>
    </location>
</feature>
<feature type="transmembrane region" description="Helical" evidence="1">
    <location>
        <begin position="163"/>
        <end position="183"/>
    </location>
</feature>
<feature type="transmembrane region" description="Helical" evidence="1">
    <location>
        <begin position="207"/>
        <end position="227"/>
    </location>
</feature>
<feature type="transmembrane region" description="Helical" evidence="1">
    <location>
        <begin position="259"/>
        <end position="279"/>
    </location>
</feature>
<feature type="transmembrane region" description="Helical" evidence="1">
    <location>
        <begin position="319"/>
        <end position="339"/>
    </location>
</feature>
<feature type="transmembrane region" description="Helical" evidence="1">
    <location>
        <begin position="366"/>
        <end position="386"/>
    </location>
</feature>
<feature type="transmembrane region" description="Helical" evidence="1">
    <location>
        <begin position="389"/>
        <end position="409"/>
    </location>
</feature>
<feature type="transmembrane region" description="Helical" evidence="1">
    <location>
        <begin position="423"/>
        <end position="443"/>
    </location>
</feature>
<evidence type="ECO:0000255" key="1">
    <source>
        <dbReference type="HAMAP-Rule" id="MF_01583"/>
    </source>
</evidence>
<keyword id="KW-0029">Amino-acid transport</keyword>
<keyword id="KW-0997">Cell inner membrane</keyword>
<keyword id="KW-1003">Cell membrane</keyword>
<keyword id="KW-0472">Membrane</keyword>
<keyword id="KW-0769">Symport</keyword>
<keyword id="KW-0812">Transmembrane</keyword>
<keyword id="KW-1133">Transmembrane helix</keyword>
<keyword id="KW-0813">Transport</keyword>
<name>TDCC_SALCH</name>
<dbReference type="EMBL" id="AE017220">
    <property type="protein sequence ID" value="AAX67095.1"/>
    <property type="molecule type" value="Genomic_DNA"/>
</dbReference>
<dbReference type="RefSeq" id="WP_000108129.1">
    <property type="nucleotide sequence ID" value="NC_006905.1"/>
</dbReference>
<dbReference type="KEGG" id="sec:SCH_3189"/>
<dbReference type="HOGENOM" id="CLU_052043_1_1_6"/>
<dbReference type="Proteomes" id="UP000000538">
    <property type="component" value="Chromosome"/>
</dbReference>
<dbReference type="GO" id="GO:0005886">
    <property type="term" value="C:plasma membrane"/>
    <property type="evidence" value="ECO:0007669"/>
    <property type="project" value="UniProtKB-SubCell"/>
</dbReference>
<dbReference type="GO" id="GO:0015194">
    <property type="term" value="F:L-serine transmembrane transporter activity"/>
    <property type="evidence" value="ECO:0007669"/>
    <property type="project" value="InterPro"/>
</dbReference>
<dbReference type="GO" id="GO:0015293">
    <property type="term" value="F:symporter activity"/>
    <property type="evidence" value="ECO:0007669"/>
    <property type="project" value="UniProtKB-UniRule"/>
</dbReference>
<dbReference type="GO" id="GO:0015565">
    <property type="term" value="F:threonine efflux transmembrane transporter activity"/>
    <property type="evidence" value="ECO:0007669"/>
    <property type="project" value="InterPro"/>
</dbReference>
<dbReference type="Gene3D" id="1.20.1740.10">
    <property type="entry name" value="Amino acid/polyamine transporter I"/>
    <property type="match status" value="1"/>
</dbReference>
<dbReference type="HAMAP" id="MF_01583">
    <property type="entry name" value="Thr_Ser_transp_TdcC"/>
    <property type="match status" value="1"/>
</dbReference>
<dbReference type="InterPro" id="IPR018227">
    <property type="entry name" value="Amino_acid_transport_2"/>
</dbReference>
<dbReference type="InterPro" id="IPR004694">
    <property type="entry name" value="Hydroxy_aa_transpt"/>
</dbReference>
<dbReference type="InterPro" id="IPR023726">
    <property type="entry name" value="Thr/Ser_transpt_TdcC"/>
</dbReference>
<dbReference type="NCBIfam" id="NF010152">
    <property type="entry name" value="PRK13629.1"/>
    <property type="match status" value="1"/>
</dbReference>
<dbReference type="NCBIfam" id="TIGR00814">
    <property type="entry name" value="stp"/>
    <property type="match status" value="1"/>
</dbReference>
<dbReference type="PANTHER" id="PTHR35334">
    <property type="entry name" value="SERINE TRANSPORTER"/>
    <property type="match status" value="1"/>
</dbReference>
<dbReference type="PANTHER" id="PTHR35334:SF1">
    <property type="entry name" value="THREONINE_SERINE TRANSPORTER TDCC"/>
    <property type="match status" value="1"/>
</dbReference>
<dbReference type="Pfam" id="PF03222">
    <property type="entry name" value="Trp_Tyr_perm"/>
    <property type="match status" value="1"/>
</dbReference>
<comment type="function">
    <text evidence="1">Involved in the import of threonine and serine into the cell, with the concomitant import of a proton (symport system).</text>
</comment>
<comment type="catalytic activity">
    <reaction evidence="1">
        <text>L-threonine(in) + H(+)(in) = L-threonine(out) + H(+)(out)</text>
        <dbReference type="Rhea" id="RHEA:28883"/>
        <dbReference type="ChEBI" id="CHEBI:15378"/>
        <dbReference type="ChEBI" id="CHEBI:57926"/>
    </reaction>
    <physiologicalReaction direction="right-to-left" evidence="1">
        <dbReference type="Rhea" id="RHEA:28885"/>
    </physiologicalReaction>
</comment>
<comment type="catalytic activity">
    <reaction evidence="1">
        <text>L-serine(in) + H(+)(in) = L-serine(out) + H(+)(out)</text>
        <dbReference type="Rhea" id="RHEA:28887"/>
        <dbReference type="ChEBI" id="CHEBI:15378"/>
        <dbReference type="ChEBI" id="CHEBI:33384"/>
    </reaction>
    <physiologicalReaction direction="right-to-left" evidence="1">
        <dbReference type="Rhea" id="RHEA:28889"/>
    </physiologicalReaction>
</comment>
<comment type="subcellular location">
    <subcellularLocation>
        <location evidence="1">Cell inner membrane</location>
        <topology evidence="1">Multi-pass membrane protein</topology>
    </subcellularLocation>
</comment>
<comment type="similarity">
    <text evidence="1">Belongs to the amino acid/polyamine transporter 2 family. SdaC/TdcC subfamily.</text>
</comment>